<sequence>MKLSKSTLIATLALTATSTNALVVQNPFSNIQQALKLDLSYDKLTSKLTDTFEQGKANIISTIAKVMNEPLDGLTPEIKNIWSEMLMKFPNSITELNFKAPPKKGKITTQQFDFHVTDAQVPNHKLRIKSTPKDLGIDTVKQYSGYLDVVDEDKHFFYYFFESRNDPKNDPVILWLNGGPGCSSLTGLFFELGPSSIDKNLKPVYNPHSWNANASVIFLDQPINVGYSYSSQSVSNTIAAGKDVYAFLQLFFKNFPEYANLDFHIAGESYAGHYIPAFASEILTHPERNFNLTSVLIGNGLTDPLVQYEYYEPMACGEGGEPSVLEPEECDGMLNSLPRCLSLIESCYESGSVWSCVPATIYCNNGQMGPYQKTGRNVYDIRTMCEGSSLCYSQLEYIDQYLNLPEVKKALGAEVDEYQSCNFDINRNFMFAGDWMKPYQKNVIDLLEKELPVLIYAGDKDFICNWLGNQAWTNRLEWSGSKGFTKAPVKSWKVGKNAAGEVKNYKHFTFLRVFGGGHMVPYDQPENALDMVNRWISGDYKY</sequence>
<reference key="1">
    <citation type="journal article" date="1992" name="Gene">
        <title>The carboxypeptidase Y-encoding gene from Candida albicans and its transcription during yeast-to-hyphae conversion.</title>
        <authorList>
            <person name="Mukhtar M."/>
            <person name="Logan D.A."/>
            <person name="Kaufer N.F."/>
        </authorList>
    </citation>
    <scope>NUCLEOTIDE SEQUENCE [GENOMIC DNA]</scope>
</reference>
<keyword id="KW-0121">Carboxypeptidase</keyword>
<keyword id="KW-1015">Disulfide bond</keyword>
<keyword id="KW-0325">Glycoprotein</keyword>
<keyword id="KW-0378">Hydrolase</keyword>
<keyword id="KW-0645">Protease</keyword>
<keyword id="KW-0732">Signal</keyword>
<keyword id="KW-0926">Vacuole</keyword>
<keyword id="KW-0865">Zymogen</keyword>
<feature type="signal peptide" evidence="2">
    <location>
        <begin position="1"/>
        <end position="21"/>
    </location>
</feature>
<feature type="propeptide" id="PRO_0000004289" evidence="2">
    <location>
        <begin position="22"/>
        <end position="127"/>
    </location>
</feature>
<feature type="chain" id="PRO_0000004290" description="Carboxypeptidase Y">
    <location>
        <begin position="128"/>
        <end position="542"/>
    </location>
</feature>
<feature type="active site" evidence="1">
    <location>
        <position position="269"/>
    </location>
</feature>
<feature type="active site" evidence="1">
    <location>
        <position position="461"/>
    </location>
</feature>
<feature type="active site" evidence="1">
    <location>
        <position position="518"/>
    </location>
</feature>
<feature type="binding site" evidence="1">
    <location>
        <position position="464"/>
    </location>
    <ligand>
        <name>substrate</name>
    </ligand>
</feature>
<feature type="binding site" evidence="1">
    <location>
        <position position="519"/>
    </location>
    <ligand>
        <name>substrate</name>
    </ligand>
</feature>
<feature type="glycosylation site" description="N-linked (GlcNAc...) asparagine" evidence="2">
    <location>
        <position position="213"/>
    </location>
</feature>
<feature type="glycosylation site" description="N-linked (GlcNAc...) asparagine" evidence="2">
    <location>
        <position position="291"/>
    </location>
</feature>
<feature type="disulfide bond" evidence="1">
    <location>
        <begin position="182"/>
        <end position="421"/>
    </location>
</feature>
<feature type="disulfide bond" evidence="1">
    <location>
        <begin position="316"/>
        <end position="330"/>
    </location>
</feature>
<feature type="disulfide bond" evidence="1">
    <location>
        <begin position="340"/>
        <end position="363"/>
    </location>
</feature>
<feature type="disulfide bond" evidence="1">
    <location>
        <begin position="347"/>
        <end position="356"/>
    </location>
</feature>
<feature type="disulfide bond" evidence="1">
    <location>
        <begin position="385"/>
        <end position="391"/>
    </location>
</feature>
<proteinExistence type="evidence at transcript level"/>
<dbReference type="EC" id="3.4.16.5"/>
<dbReference type="EMBL" id="M95182">
    <property type="protein sequence ID" value="AAA34326.2"/>
    <property type="molecule type" value="Genomic_DNA"/>
</dbReference>
<dbReference type="PIR" id="JC1380">
    <property type="entry name" value="JC1380"/>
</dbReference>
<dbReference type="SMR" id="P30574"/>
<dbReference type="ESTHER" id="canal-cbpy">
    <property type="family name" value="Carboxypeptidase_S10"/>
</dbReference>
<dbReference type="MEROPS" id="S10.001"/>
<dbReference type="GlyCosmos" id="P30574">
    <property type="glycosylation" value="2 sites, No reported glycans"/>
</dbReference>
<dbReference type="VEuPathDB" id="FungiDB:C7_03360W_A"/>
<dbReference type="VEuPathDB" id="FungiDB:CAWG_05669"/>
<dbReference type="GO" id="GO:0005576">
    <property type="term" value="C:extracellular region"/>
    <property type="evidence" value="ECO:0007669"/>
    <property type="project" value="EnsemblFungi"/>
</dbReference>
<dbReference type="GO" id="GO:0000328">
    <property type="term" value="C:fungal-type vacuole lumen"/>
    <property type="evidence" value="ECO:0007669"/>
    <property type="project" value="EnsemblFungi"/>
</dbReference>
<dbReference type="GO" id="GO:0004185">
    <property type="term" value="F:serine-type carboxypeptidase activity"/>
    <property type="evidence" value="ECO:0007669"/>
    <property type="project" value="UniProtKB-EC"/>
</dbReference>
<dbReference type="GO" id="GO:0006995">
    <property type="term" value="P:cellular response to nitrogen starvation"/>
    <property type="evidence" value="ECO:0007669"/>
    <property type="project" value="EnsemblFungi"/>
</dbReference>
<dbReference type="GO" id="GO:0016236">
    <property type="term" value="P:macroautophagy"/>
    <property type="evidence" value="ECO:0007669"/>
    <property type="project" value="EnsemblFungi"/>
</dbReference>
<dbReference type="GO" id="GO:0046938">
    <property type="term" value="P:phytochelatin biosynthetic process"/>
    <property type="evidence" value="ECO:0007669"/>
    <property type="project" value="EnsemblFungi"/>
</dbReference>
<dbReference type="GO" id="GO:0031638">
    <property type="term" value="P:zymogen activation"/>
    <property type="evidence" value="ECO:0007669"/>
    <property type="project" value="EnsemblFungi"/>
</dbReference>
<dbReference type="FunFam" id="1.10.287.410:FF:000001">
    <property type="entry name" value="Carboxypeptidase Y"/>
    <property type="match status" value="1"/>
</dbReference>
<dbReference type="Gene3D" id="1.10.287.410">
    <property type="match status" value="1"/>
</dbReference>
<dbReference type="Gene3D" id="3.40.50.1820">
    <property type="entry name" value="alpha/beta hydrolase"/>
    <property type="match status" value="1"/>
</dbReference>
<dbReference type="InterPro" id="IPR029058">
    <property type="entry name" value="AB_hydrolase_fold"/>
</dbReference>
<dbReference type="InterPro" id="IPR001563">
    <property type="entry name" value="Peptidase_S10"/>
</dbReference>
<dbReference type="InterPro" id="IPR008442">
    <property type="entry name" value="Propeptide_carboxypepY"/>
</dbReference>
<dbReference type="InterPro" id="IPR033124">
    <property type="entry name" value="Ser_caboxypep_his_AS"/>
</dbReference>
<dbReference type="InterPro" id="IPR018202">
    <property type="entry name" value="Ser_caboxypep_ser_AS"/>
</dbReference>
<dbReference type="PANTHER" id="PTHR11802:SF113">
    <property type="entry name" value="SERINE CARBOXYPEPTIDASE CTSA-4.1"/>
    <property type="match status" value="1"/>
</dbReference>
<dbReference type="PANTHER" id="PTHR11802">
    <property type="entry name" value="SERINE PROTEASE FAMILY S10 SERINE CARBOXYPEPTIDASE"/>
    <property type="match status" value="1"/>
</dbReference>
<dbReference type="Pfam" id="PF05388">
    <property type="entry name" value="Carbpep_Y_N"/>
    <property type="match status" value="1"/>
</dbReference>
<dbReference type="Pfam" id="PF00450">
    <property type="entry name" value="Peptidase_S10"/>
    <property type="match status" value="1"/>
</dbReference>
<dbReference type="PRINTS" id="PR00724">
    <property type="entry name" value="CRBOXYPTASEC"/>
</dbReference>
<dbReference type="SUPFAM" id="SSF53474">
    <property type="entry name" value="alpha/beta-Hydrolases"/>
    <property type="match status" value="1"/>
</dbReference>
<dbReference type="PROSITE" id="PS00560">
    <property type="entry name" value="CARBOXYPEPT_SER_HIS"/>
    <property type="match status" value="1"/>
</dbReference>
<dbReference type="PROSITE" id="PS00131">
    <property type="entry name" value="CARBOXYPEPT_SER_SER"/>
    <property type="match status" value="1"/>
</dbReference>
<evidence type="ECO:0000250" key="1"/>
<evidence type="ECO:0000255" key="2"/>
<evidence type="ECO:0000255" key="3">
    <source>
        <dbReference type="PROSITE-ProRule" id="PRU10074"/>
    </source>
</evidence>
<evidence type="ECO:0000255" key="4">
    <source>
        <dbReference type="PROSITE-ProRule" id="PRU10075"/>
    </source>
</evidence>
<evidence type="ECO:0000305" key="5"/>
<accession>P30574</accession>
<organism>
    <name type="scientific">Candida albicans</name>
    <name type="common">Yeast</name>
    <dbReference type="NCBI Taxonomy" id="5476"/>
    <lineage>
        <taxon>Eukaryota</taxon>
        <taxon>Fungi</taxon>
        <taxon>Dikarya</taxon>
        <taxon>Ascomycota</taxon>
        <taxon>Saccharomycotina</taxon>
        <taxon>Pichiomycetes</taxon>
        <taxon>Debaryomycetaceae</taxon>
        <taxon>Candida/Lodderomyces clade</taxon>
        <taxon>Candida</taxon>
    </lineage>
</organism>
<gene>
    <name type="primary">CPY1</name>
</gene>
<protein>
    <recommendedName>
        <fullName>Carboxypeptidase Y</fullName>
        <ecNumber>3.4.16.5</ecNumber>
    </recommendedName>
    <alternativeName>
        <fullName>Carboxypeptidase YSCY</fullName>
    </alternativeName>
</protein>
<name>CBPY_CANAX</name>
<comment type="function">
    <text>Involved in degradation of small peptides.</text>
</comment>
<comment type="catalytic activity">
    <reaction evidence="3 4">
        <text>Release of a C-terminal amino acid with broad specificity.</text>
        <dbReference type="EC" id="3.4.16.5"/>
    </reaction>
</comment>
<comment type="subcellular location">
    <subcellularLocation>
        <location>Vacuole</location>
    </subcellularLocation>
    <text>Lysosome-like vacuoles.</text>
</comment>
<comment type="induction">
    <text>Transiently down-regulated during the early events of yeast to hyphae conversion.</text>
</comment>
<comment type="similarity">
    <text evidence="5">Belongs to the peptidase S10 family.</text>
</comment>